<reference key="1">
    <citation type="journal article" date="2000" name="Nucleic Acids Res.">
        <title>Genome sequences of Chlamydia trachomatis MoPn and Chlamydia pneumoniae AR39.</title>
        <authorList>
            <person name="Read T.D."/>
            <person name="Brunham R.C."/>
            <person name="Shen C."/>
            <person name="Gill S.R."/>
            <person name="Heidelberg J.F."/>
            <person name="White O."/>
            <person name="Hickey E.K."/>
            <person name="Peterson J.D."/>
            <person name="Utterback T.R."/>
            <person name="Berry K.J."/>
            <person name="Bass S."/>
            <person name="Linher K.D."/>
            <person name="Weidman J.F."/>
            <person name="Khouri H.M."/>
            <person name="Craven B."/>
            <person name="Bowman C."/>
            <person name="Dodson R.J."/>
            <person name="Gwinn M.L."/>
            <person name="Nelson W.C."/>
            <person name="DeBoy R.T."/>
            <person name="Kolonay J.F."/>
            <person name="McClarty G."/>
            <person name="Salzberg S.L."/>
            <person name="Eisen J.A."/>
            <person name="Fraser C.M."/>
        </authorList>
    </citation>
    <scope>NUCLEOTIDE SEQUENCE [LARGE SCALE GENOMIC DNA]</scope>
    <source>
        <strain>MoPn / Nigg</strain>
    </source>
</reference>
<protein>
    <recommendedName>
        <fullName>Probable outer membrane protein PmpG</fullName>
    </recommendedName>
    <alternativeName>
        <fullName>Polymorphic membrane protein G</fullName>
    </alternativeName>
</protein>
<name>PMPG_CHLMU</name>
<proteinExistence type="evidence at transcript level"/>
<evidence type="ECO:0000255" key="1"/>
<evidence type="ECO:0000255" key="2">
    <source>
        <dbReference type="PROSITE-ProRule" id="PRU00556"/>
    </source>
</evidence>
<evidence type="ECO:0000305" key="3"/>
<comment type="subcellular location">
    <subcellularLocation>
        <location>Secreted</location>
        <location>Cell wall</location>
    </subcellularLocation>
    <subcellularLocation>
        <location evidence="3">Cell outer membrane</location>
        <topology evidence="3">Peripheral membrane protein</topology>
        <orientation evidence="3">Extracellular side</orientation>
    </subcellularLocation>
</comment>
<comment type="developmental stage">
    <text>Elementary body.</text>
</comment>
<comment type="similarity">
    <text evidence="3">Belongs to the PMP outer membrane protein family.</text>
</comment>
<sequence>MMQTPFHKFFLLAMLSYSLLQGGHAADISMPPGIYDGTTLTAPFPYTVIGDPRGTKVTSSGSLELKNLDNSIATLPLSCFGNLLGNFTIAGRGHSLVFENIRTSTNGAALSNHAPSGLFVIEAFDELSLLNCNSLVSVVPQTGGTTTSVPSNGTIYSRTDLVLRDIKKVSFYSNLVSGDGGAIDAQSLMVNGIEKLCTFQENVAQSDGGACQVTKTFSAVGNKVPLSFLGNVAGNKGGGVAAVKDGQGAGGATDLSVNFANNTAVEFEGNSARIGGGIYSDGNISFLGNAKTVFLSNVASPIYVDPAAAGGQPPADKDNYGDGGAIFCKNDTNIGEVSFKDEGVVFFSKNIAAGKGGAIYAKKLTISDCGPVQFLGNVANDGGAIYLVDQGELSLSADRGDIIFDGNLKRMATQGAATVHDVMVASNAISMATGGQITTLRAKEGRRILFNDPIEMANGQPVIQTLTVNEGEGYTGDIVFAKGDNVLYSSIELSQGRIILREQTKLLVNSLTQTGGSVHMEGGSTLDFAVTTPPAANSMALTNVHFSLASLLKNNGVTNPPTNPPVQVSSPAVIGNTAAGTVTISGPIFFEDLDETAYDNNQWLGADQTIDVLQLHLGANPPANAPTDLTLGNESSKYGYQGSWTLQWEPDPANPPQNNSYMLKASWTKTGYNPGPERVASLVSNSLWGSILDVRSAHSAIQASIDGRAYCRGIWISGISNFFYHDQDALGQGYRHISGGYSIGANSYFGSSMFGLAFTETFGRSKDYVVCRSNDHTCVGSVYLSTRQALCGSCLFGDAFVRASYGFGNQHMKTSYTFAEESNVRWDNNCVVGEVGAGLPIMLAASKLYLNELRPFVQAEFAYAEHESFTERGDQAREFKSGHLMNLSIPVGVKFDRCSSKHPNKYSFMGAYICDAYRSISGTETTLLSHKETWTTDAFHLARHGVMVRGSMYASLTGNIEVYGHGKYEYRDASRGYGLSIGSKIRF</sequence>
<accession>Q9PL45</accession>
<gene>
    <name type="primary">pmpG</name>
    <name type="ordered locus">TC_0263</name>
</gene>
<feature type="signal peptide" evidence="1">
    <location>
        <begin position="1"/>
        <end position="25"/>
    </location>
</feature>
<feature type="chain" id="PRO_0000024728" description="Probable outer membrane protein PmpG">
    <location>
        <begin position="26"/>
        <end position="987"/>
    </location>
</feature>
<feature type="domain" description="Autotransporter" evidence="2">
    <location>
        <begin position="707"/>
        <end position="987"/>
    </location>
</feature>
<keyword id="KW-0998">Cell outer membrane</keyword>
<keyword id="KW-0134">Cell wall</keyword>
<keyword id="KW-0472">Membrane</keyword>
<keyword id="KW-0964">Secreted</keyword>
<keyword id="KW-0732">Signal</keyword>
<keyword id="KW-0812">Transmembrane</keyword>
<keyword id="KW-1134">Transmembrane beta strand</keyword>
<dbReference type="EMBL" id="AE002160">
    <property type="protein sequence ID" value="AAF39132.1"/>
    <property type="molecule type" value="Genomic_DNA"/>
</dbReference>
<dbReference type="PIR" id="H81722">
    <property type="entry name" value="H81722"/>
</dbReference>
<dbReference type="KEGG" id="cmu:TC_0263"/>
<dbReference type="eggNOG" id="COG3210">
    <property type="taxonomic scope" value="Bacteria"/>
</dbReference>
<dbReference type="HOGENOM" id="CLU_004549_1_1_0"/>
<dbReference type="Proteomes" id="UP000000800">
    <property type="component" value="Chromosome"/>
</dbReference>
<dbReference type="GO" id="GO:0009279">
    <property type="term" value="C:cell outer membrane"/>
    <property type="evidence" value="ECO:0007669"/>
    <property type="project" value="UniProtKB-SubCell"/>
</dbReference>
<dbReference type="GO" id="GO:0005576">
    <property type="term" value="C:extracellular region"/>
    <property type="evidence" value="ECO:0007669"/>
    <property type="project" value="UniProtKB-KW"/>
</dbReference>
<dbReference type="Gene3D" id="2.40.128.130">
    <property type="entry name" value="Autotransporter beta-domain"/>
    <property type="match status" value="1"/>
</dbReference>
<dbReference type="InterPro" id="IPR005546">
    <property type="entry name" value="Autotransporte_beta"/>
</dbReference>
<dbReference type="InterPro" id="IPR036709">
    <property type="entry name" value="Autotransporte_beta_dom_sf"/>
</dbReference>
<dbReference type="InterPro" id="IPR011427">
    <property type="entry name" value="Polymorphic_membr_middle"/>
</dbReference>
<dbReference type="InterPro" id="IPR003368">
    <property type="entry name" value="POMP_repeat"/>
</dbReference>
<dbReference type="NCBIfam" id="TIGR01376">
    <property type="entry name" value="POMP_repeat"/>
    <property type="match status" value="2"/>
</dbReference>
<dbReference type="Pfam" id="PF03797">
    <property type="entry name" value="Autotransporter"/>
    <property type="match status" value="1"/>
</dbReference>
<dbReference type="Pfam" id="PF02415">
    <property type="entry name" value="Chlam_PMP"/>
    <property type="match status" value="2"/>
</dbReference>
<dbReference type="Pfam" id="PF07548">
    <property type="entry name" value="ChlamPMP_M"/>
    <property type="match status" value="1"/>
</dbReference>
<dbReference type="SMART" id="SM00869">
    <property type="entry name" value="Autotransporter"/>
    <property type="match status" value="1"/>
</dbReference>
<dbReference type="SUPFAM" id="SSF103515">
    <property type="entry name" value="Autotransporter"/>
    <property type="match status" value="1"/>
</dbReference>
<dbReference type="PROSITE" id="PS51208">
    <property type="entry name" value="AUTOTRANSPORTER"/>
    <property type="match status" value="1"/>
</dbReference>
<organism>
    <name type="scientific">Chlamydia muridarum (strain MoPn / Nigg)</name>
    <dbReference type="NCBI Taxonomy" id="243161"/>
    <lineage>
        <taxon>Bacteria</taxon>
        <taxon>Pseudomonadati</taxon>
        <taxon>Chlamydiota</taxon>
        <taxon>Chlamydiia</taxon>
        <taxon>Chlamydiales</taxon>
        <taxon>Chlamydiaceae</taxon>
        <taxon>Chlamydia/Chlamydophila group</taxon>
        <taxon>Chlamydia</taxon>
    </lineage>
</organism>